<sequence length="322" mass="36098">MEQVPIKEMRLSDLRPNNKSIDTDLGGTKLVVIGKPGSGKSTLIKALLDSKRHIIPCAVVISGSEEANGFYKGVVPDLFIYHQFSPSIIDRIHRRQVKAKAEMGSKKSWLLVVIDDCMDNAKMFNDKEVRALFKNGRHWNVLVVIANQYVMDLTPDLRSSVDGVFLFRENNVTYRDKTYANFASVVPKKLYPTVMETVCQNYRCMFIDNTKATDNWHDSVFWYKAPYSKSAVAPFGARSYWKYACSKTGEEMPAVFDNVKILGDLLLKELPEAGEALVTYGGKDGPSDNEDGPSDDEDGPSDDEEGLSKDGVSEYYQSDLDD</sequence>
<proteinExistence type="predicted"/>
<organism>
    <name type="scientific">Frog virus 3 (isolate Goorha)</name>
    <name type="common">FV-3</name>
    <dbReference type="NCBI Taxonomy" id="654924"/>
    <lineage>
        <taxon>Viruses</taxon>
        <taxon>Varidnaviria</taxon>
        <taxon>Bamfordvirae</taxon>
        <taxon>Nucleocytoviricota</taxon>
        <taxon>Megaviricetes</taxon>
        <taxon>Pimascovirales</taxon>
        <taxon>Iridoviridae</taxon>
        <taxon>Alphairidovirinae</taxon>
        <taxon>Ranavirus</taxon>
        <taxon>Frog virus 3</taxon>
    </lineage>
</organism>
<name>015R_FRG3G</name>
<reference key="1">
    <citation type="journal article" date="2004" name="Virology">
        <title>Comparative genomic analyses of frog virus 3, type species of the genus Ranavirus (family Iridoviridae).</title>
        <authorList>
            <person name="Tan W.G."/>
            <person name="Barkman T.J."/>
            <person name="Gregory Chinchar V."/>
            <person name="Essani K."/>
        </authorList>
    </citation>
    <scope>NUCLEOTIDE SEQUENCE [LARGE SCALE GENOMIC DNA]</scope>
</reference>
<gene>
    <name type="ORF">FV3-015R</name>
</gene>
<evidence type="ECO:0000256" key="1">
    <source>
        <dbReference type="SAM" id="MobiDB-lite"/>
    </source>
</evidence>
<organismHost>
    <name type="scientific">Dryophytes versicolor</name>
    <name type="common">chameleon treefrog</name>
    <dbReference type="NCBI Taxonomy" id="30343"/>
</organismHost>
<organismHost>
    <name type="scientific">Lithobates pipiens</name>
    <name type="common">Northern leopard frog</name>
    <name type="synonym">Rana pipiens</name>
    <dbReference type="NCBI Taxonomy" id="8404"/>
</organismHost>
<organismHost>
    <name type="scientific">Lithobates sylvaticus</name>
    <name type="common">Wood frog</name>
    <name type="synonym">Rana sylvatica</name>
    <dbReference type="NCBI Taxonomy" id="45438"/>
</organismHost>
<organismHost>
    <name type="scientific">Notophthalmus viridescens</name>
    <name type="common">Eastern newt</name>
    <name type="synonym">Triturus viridescens</name>
    <dbReference type="NCBI Taxonomy" id="8316"/>
</organismHost>
<dbReference type="EMBL" id="AY548484">
    <property type="protein sequence ID" value="AAT09674.1"/>
    <property type="molecule type" value="Genomic_DNA"/>
</dbReference>
<dbReference type="RefSeq" id="YP_031593.1">
    <property type="nucleotide sequence ID" value="NC_005946.1"/>
</dbReference>
<dbReference type="KEGG" id="vg:2947735"/>
<dbReference type="Proteomes" id="UP000008770">
    <property type="component" value="Segment"/>
</dbReference>
<dbReference type="Gene3D" id="3.40.50.300">
    <property type="entry name" value="P-loop containing nucleotide triphosphate hydrolases"/>
    <property type="match status" value="1"/>
</dbReference>
<dbReference type="InterPro" id="IPR006758">
    <property type="entry name" value="A32L"/>
</dbReference>
<dbReference type="InterPro" id="IPR027417">
    <property type="entry name" value="P-loop_NTPase"/>
</dbReference>
<dbReference type="Pfam" id="PF04665">
    <property type="entry name" value="Pox_A32"/>
    <property type="match status" value="1"/>
</dbReference>
<dbReference type="SUPFAM" id="SSF52540">
    <property type="entry name" value="P-loop containing nucleoside triphosphate hydrolases"/>
    <property type="match status" value="1"/>
</dbReference>
<accession>Q6GZW0</accession>
<feature type="chain" id="PRO_0000410504" description="Uncharacterized protein 015R">
    <location>
        <begin position="1"/>
        <end position="322"/>
    </location>
</feature>
<feature type="region of interest" description="Disordered" evidence="1">
    <location>
        <begin position="277"/>
        <end position="322"/>
    </location>
</feature>
<feature type="compositionally biased region" description="Acidic residues" evidence="1">
    <location>
        <begin position="287"/>
        <end position="305"/>
    </location>
</feature>
<keyword id="KW-1185">Reference proteome</keyword>
<protein>
    <recommendedName>
        <fullName>Uncharacterized protein 015R</fullName>
    </recommendedName>
</protein>